<comment type="function">
    <text evidence="1">Converts heme B (protoheme IX) to heme O by substitution of the vinyl group on carbon 2 of heme B porphyrin ring with a hydroxyethyl farnesyl side group.</text>
</comment>
<comment type="catalytic activity">
    <reaction evidence="1">
        <text>heme b + (2E,6E)-farnesyl diphosphate + H2O = Fe(II)-heme o + diphosphate</text>
        <dbReference type="Rhea" id="RHEA:28070"/>
        <dbReference type="ChEBI" id="CHEBI:15377"/>
        <dbReference type="ChEBI" id="CHEBI:33019"/>
        <dbReference type="ChEBI" id="CHEBI:60344"/>
        <dbReference type="ChEBI" id="CHEBI:60530"/>
        <dbReference type="ChEBI" id="CHEBI:175763"/>
        <dbReference type="EC" id="2.5.1.141"/>
    </reaction>
</comment>
<comment type="pathway">
    <text evidence="1">Porphyrin-containing compound metabolism; heme O biosynthesis; heme O from protoheme: step 1/1.</text>
</comment>
<comment type="subcellular location">
    <subcellularLocation>
        <location evidence="1">Cell inner membrane</location>
        <topology evidence="1">Multi-pass membrane protein</topology>
    </subcellularLocation>
</comment>
<comment type="miscellaneous">
    <text evidence="1">Carbon 2 of the heme B porphyrin ring is defined according to the Fischer nomenclature.</text>
</comment>
<comment type="similarity">
    <text evidence="1">Belongs to the UbiA prenyltransferase family. Protoheme IX farnesyltransferase subfamily.</text>
</comment>
<proteinExistence type="inferred from homology"/>
<sequence length="310" mass="33466">MNTQARLTSTQWKARFKGYVQVTKPGIIFGNLISVAGGFLLAAKGDVDLVLMLASLVGLSLVVASGCAINNCIDRDIDAKMQRTCKRVTVTGEIPLSHVLLFGIAIGVLGFGILALFTNALALLFAAIGYVVYVGIYSLYMKRNSVYGTLVGSFSGAVPPVVGYCSVTGQMDMGAVILLLMFSLWQMPHSYAIAIFRFNDYAAAKIPVLPVAEGMAKAKHHIVLYIAVFALVSTMLPLAGYTGTAFMAVTCATSLWWLTMALKGYRQDVDMPRWARQVFGFSIITITALSVTMALDFQAVSQTPLFTLVR</sequence>
<name>CYOE2_SHESR</name>
<keyword id="KW-0997">Cell inner membrane</keyword>
<keyword id="KW-1003">Cell membrane</keyword>
<keyword id="KW-0350">Heme biosynthesis</keyword>
<keyword id="KW-0472">Membrane</keyword>
<keyword id="KW-0808">Transferase</keyword>
<keyword id="KW-0812">Transmembrane</keyword>
<keyword id="KW-1133">Transmembrane helix</keyword>
<feature type="chain" id="PRO_0000326955" description="Protoheme IX farnesyltransferase 2">
    <location>
        <begin position="1"/>
        <end position="310"/>
    </location>
</feature>
<feature type="transmembrane region" description="Helical" evidence="1">
    <location>
        <begin position="25"/>
        <end position="45"/>
    </location>
</feature>
<feature type="transmembrane region" description="Helical" evidence="1">
    <location>
        <begin position="49"/>
        <end position="69"/>
    </location>
</feature>
<feature type="transmembrane region" description="Helical" evidence="1">
    <location>
        <begin position="98"/>
        <end position="118"/>
    </location>
</feature>
<feature type="transmembrane region" description="Helical" evidence="1">
    <location>
        <begin position="121"/>
        <end position="141"/>
    </location>
</feature>
<feature type="transmembrane region" description="Helical" evidence="1">
    <location>
        <begin position="145"/>
        <end position="165"/>
    </location>
</feature>
<feature type="transmembrane region" description="Helical" evidence="1">
    <location>
        <begin position="176"/>
        <end position="196"/>
    </location>
</feature>
<feature type="transmembrane region" description="Helical" evidence="1">
    <location>
        <begin position="222"/>
        <end position="242"/>
    </location>
</feature>
<feature type="transmembrane region" description="Helical" evidence="1">
    <location>
        <begin position="245"/>
        <end position="265"/>
    </location>
</feature>
<feature type="transmembrane region" description="Helical" evidence="1">
    <location>
        <begin position="277"/>
        <end position="297"/>
    </location>
</feature>
<organism>
    <name type="scientific">Shewanella sp. (strain MR-7)</name>
    <dbReference type="NCBI Taxonomy" id="60481"/>
    <lineage>
        <taxon>Bacteria</taxon>
        <taxon>Pseudomonadati</taxon>
        <taxon>Pseudomonadota</taxon>
        <taxon>Gammaproteobacteria</taxon>
        <taxon>Alteromonadales</taxon>
        <taxon>Shewanellaceae</taxon>
        <taxon>Shewanella</taxon>
    </lineage>
</organism>
<reference key="1">
    <citation type="submission" date="2006-08" db="EMBL/GenBank/DDBJ databases">
        <title>Complete sequence of chromosome 1 of Shewanella sp. MR-7.</title>
        <authorList>
            <person name="Copeland A."/>
            <person name="Lucas S."/>
            <person name="Lapidus A."/>
            <person name="Barry K."/>
            <person name="Detter J.C."/>
            <person name="Glavina del Rio T."/>
            <person name="Hammon N."/>
            <person name="Israni S."/>
            <person name="Dalin E."/>
            <person name="Tice H."/>
            <person name="Pitluck S."/>
            <person name="Kiss H."/>
            <person name="Brettin T."/>
            <person name="Bruce D."/>
            <person name="Han C."/>
            <person name="Tapia R."/>
            <person name="Gilna P."/>
            <person name="Schmutz J."/>
            <person name="Larimer F."/>
            <person name="Land M."/>
            <person name="Hauser L."/>
            <person name="Kyrpides N."/>
            <person name="Mikhailova N."/>
            <person name="Nealson K."/>
            <person name="Konstantinidis K."/>
            <person name="Klappenbach J."/>
            <person name="Tiedje J."/>
            <person name="Richardson P."/>
        </authorList>
    </citation>
    <scope>NUCLEOTIDE SEQUENCE [LARGE SCALE GENOMIC DNA]</scope>
    <source>
        <strain>MR-7</strain>
    </source>
</reference>
<evidence type="ECO:0000255" key="1">
    <source>
        <dbReference type="HAMAP-Rule" id="MF_00154"/>
    </source>
</evidence>
<accession>Q0HPR0</accession>
<protein>
    <recommendedName>
        <fullName evidence="1">Protoheme IX farnesyltransferase 2</fullName>
        <ecNumber evidence="1">2.5.1.141</ecNumber>
    </recommendedName>
    <alternativeName>
        <fullName evidence="1">Heme B farnesyltransferase 2</fullName>
    </alternativeName>
    <alternativeName>
        <fullName evidence="1">Heme O synthase 2</fullName>
    </alternativeName>
</protein>
<gene>
    <name evidence="1" type="primary">cyoE2</name>
    <name type="ordered locus">Shewmr7_3918</name>
</gene>
<dbReference type="EC" id="2.5.1.141" evidence="1"/>
<dbReference type="EMBL" id="CP000444">
    <property type="protein sequence ID" value="ABI44895.1"/>
    <property type="molecule type" value="Genomic_DNA"/>
</dbReference>
<dbReference type="SMR" id="Q0HPR0"/>
<dbReference type="KEGG" id="shm:Shewmr7_3918"/>
<dbReference type="HOGENOM" id="CLU_029631_0_0_6"/>
<dbReference type="UniPathway" id="UPA00834">
    <property type="reaction ID" value="UER00712"/>
</dbReference>
<dbReference type="GO" id="GO:0005886">
    <property type="term" value="C:plasma membrane"/>
    <property type="evidence" value="ECO:0007669"/>
    <property type="project" value="UniProtKB-SubCell"/>
</dbReference>
<dbReference type="GO" id="GO:0008495">
    <property type="term" value="F:protoheme IX farnesyltransferase activity"/>
    <property type="evidence" value="ECO:0007669"/>
    <property type="project" value="UniProtKB-UniRule"/>
</dbReference>
<dbReference type="GO" id="GO:0048034">
    <property type="term" value="P:heme O biosynthetic process"/>
    <property type="evidence" value="ECO:0007669"/>
    <property type="project" value="UniProtKB-UniRule"/>
</dbReference>
<dbReference type="CDD" id="cd13957">
    <property type="entry name" value="PT_UbiA_Cox10"/>
    <property type="match status" value="1"/>
</dbReference>
<dbReference type="FunFam" id="1.10.357.140:FF:000001">
    <property type="entry name" value="Protoheme IX farnesyltransferase"/>
    <property type="match status" value="1"/>
</dbReference>
<dbReference type="Gene3D" id="1.10.357.140">
    <property type="entry name" value="UbiA prenyltransferase"/>
    <property type="match status" value="1"/>
</dbReference>
<dbReference type="HAMAP" id="MF_00154">
    <property type="entry name" value="CyoE_CtaB"/>
    <property type="match status" value="1"/>
</dbReference>
<dbReference type="InterPro" id="IPR006369">
    <property type="entry name" value="Protohaem_IX_farnesylTrfase"/>
</dbReference>
<dbReference type="InterPro" id="IPR000537">
    <property type="entry name" value="UbiA_prenyltransferase"/>
</dbReference>
<dbReference type="InterPro" id="IPR030470">
    <property type="entry name" value="UbiA_prenylTrfase_CS"/>
</dbReference>
<dbReference type="InterPro" id="IPR044878">
    <property type="entry name" value="UbiA_sf"/>
</dbReference>
<dbReference type="NCBIfam" id="TIGR01473">
    <property type="entry name" value="cyoE_ctaB"/>
    <property type="match status" value="1"/>
</dbReference>
<dbReference type="NCBIfam" id="NF003348">
    <property type="entry name" value="PRK04375.1-1"/>
    <property type="match status" value="1"/>
</dbReference>
<dbReference type="PANTHER" id="PTHR43448">
    <property type="entry name" value="PROTOHEME IX FARNESYLTRANSFERASE, MITOCHONDRIAL"/>
    <property type="match status" value="1"/>
</dbReference>
<dbReference type="PANTHER" id="PTHR43448:SF2">
    <property type="entry name" value="PROTOHEME IX FARNESYLTRANSFERASE, MITOCHONDRIAL"/>
    <property type="match status" value="1"/>
</dbReference>
<dbReference type="Pfam" id="PF01040">
    <property type="entry name" value="UbiA"/>
    <property type="match status" value="1"/>
</dbReference>
<dbReference type="PROSITE" id="PS00943">
    <property type="entry name" value="UBIA"/>
    <property type="match status" value="1"/>
</dbReference>